<comment type="subcellular location">
    <subcellularLocation>
        <location evidence="2">Membrane</location>
        <topology evidence="2">Multi-pass membrane protein</topology>
    </subcellularLocation>
</comment>
<proteinExistence type="predicted"/>
<organism>
    <name type="scientific">Dictyostelium discoideum</name>
    <name type="common">Social amoeba</name>
    <dbReference type="NCBI Taxonomy" id="44689"/>
    <lineage>
        <taxon>Eukaryota</taxon>
        <taxon>Amoebozoa</taxon>
        <taxon>Evosea</taxon>
        <taxon>Eumycetozoa</taxon>
        <taxon>Dictyostelia</taxon>
        <taxon>Dictyosteliales</taxon>
        <taxon>Dictyosteliaceae</taxon>
        <taxon>Dictyostelium</taxon>
    </lineage>
</organism>
<feature type="chain" id="PRO_0000352406" description="Uncharacterized transmembrane protein DDB_G0281339">
    <location>
        <begin position="1"/>
        <end position="224"/>
    </location>
</feature>
<feature type="transmembrane region" description="Helical" evidence="1">
    <location>
        <begin position="39"/>
        <end position="59"/>
    </location>
</feature>
<feature type="transmembrane region" description="Helical" evidence="1">
    <location>
        <begin position="70"/>
        <end position="90"/>
    </location>
</feature>
<feature type="transmembrane region" description="Helical" evidence="1">
    <location>
        <begin position="103"/>
        <end position="123"/>
    </location>
</feature>
<feature type="transmembrane region" description="Helical" evidence="1">
    <location>
        <begin position="139"/>
        <end position="159"/>
    </location>
</feature>
<dbReference type="EMBL" id="AAFI02000040">
    <property type="protein sequence ID" value="EAL66755.1"/>
    <property type="molecule type" value="Genomic_DNA"/>
</dbReference>
<dbReference type="RefSeq" id="XP_640730.1">
    <property type="nucleotide sequence ID" value="XM_635638.1"/>
</dbReference>
<dbReference type="PaxDb" id="44689-DDB0204142"/>
<dbReference type="EnsemblProtists" id="EAL66755">
    <property type="protein sequence ID" value="EAL66755"/>
    <property type="gene ID" value="DDB_G0281339"/>
</dbReference>
<dbReference type="GeneID" id="8623006"/>
<dbReference type="KEGG" id="ddi:DDB_G0281339"/>
<dbReference type="dictyBase" id="DDB_G0281339"/>
<dbReference type="VEuPathDB" id="AmoebaDB:DDB_G0281339"/>
<dbReference type="eggNOG" id="ENOG502RF3J">
    <property type="taxonomic scope" value="Eukaryota"/>
</dbReference>
<dbReference type="HOGENOM" id="CLU_1236968_0_0_1"/>
<dbReference type="InParanoid" id="Q54U35"/>
<dbReference type="OMA" id="RSKEPCG"/>
<dbReference type="PRO" id="PR:Q54U35"/>
<dbReference type="Proteomes" id="UP000002195">
    <property type="component" value="Chromosome 3"/>
</dbReference>
<dbReference type="GO" id="GO:0016020">
    <property type="term" value="C:membrane"/>
    <property type="evidence" value="ECO:0007669"/>
    <property type="project" value="UniProtKB-SubCell"/>
</dbReference>
<dbReference type="InterPro" id="IPR013714">
    <property type="entry name" value="Golgi_TVP15"/>
</dbReference>
<dbReference type="Pfam" id="PF08507">
    <property type="entry name" value="COPI_assoc"/>
    <property type="match status" value="1"/>
</dbReference>
<name>Y4142_DICDI</name>
<keyword id="KW-0472">Membrane</keyword>
<keyword id="KW-1185">Reference proteome</keyword>
<keyword id="KW-0812">Transmembrane</keyword>
<keyword id="KW-1133">Transmembrane helix</keyword>
<reference key="1">
    <citation type="journal article" date="2005" name="Nature">
        <title>The genome of the social amoeba Dictyostelium discoideum.</title>
        <authorList>
            <person name="Eichinger L."/>
            <person name="Pachebat J.A."/>
            <person name="Gloeckner G."/>
            <person name="Rajandream M.A."/>
            <person name="Sucgang R."/>
            <person name="Berriman M."/>
            <person name="Song J."/>
            <person name="Olsen R."/>
            <person name="Szafranski K."/>
            <person name="Xu Q."/>
            <person name="Tunggal B."/>
            <person name="Kummerfeld S."/>
            <person name="Madera M."/>
            <person name="Konfortov B.A."/>
            <person name="Rivero F."/>
            <person name="Bankier A.T."/>
            <person name="Lehmann R."/>
            <person name="Hamlin N."/>
            <person name="Davies R."/>
            <person name="Gaudet P."/>
            <person name="Fey P."/>
            <person name="Pilcher K."/>
            <person name="Chen G."/>
            <person name="Saunders D."/>
            <person name="Sodergren E.J."/>
            <person name="Davis P."/>
            <person name="Kerhornou A."/>
            <person name="Nie X."/>
            <person name="Hall N."/>
            <person name="Anjard C."/>
            <person name="Hemphill L."/>
            <person name="Bason N."/>
            <person name="Farbrother P."/>
            <person name="Desany B."/>
            <person name="Just E."/>
            <person name="Morio T."/>
            <person name="Rost R."/>
            <person name="Churcher C.M."/>
            <person name="Cooper J."/>
            <person name="Haydock S."/>
            <person name="van Driessche N."/>
            <person name="Cronin A."/>
            <person name="Goodhead I."/>
            <person name="Muzny D.M."/>
            <person name="Mourier T."/>
            <person name="Pain A."/>
            <person name="Lu M."/>
            <person name="Harper D."/>
            <person name="Lindsay R."/>
            <person name="Hauser H."/>
            <person name="James K.D."/>
            <person name="Quiles M."/>
            <person name="Madan Babu M."/>
            <person name="Saito T."/>
            <person name="Buchrieser C."/>
            <person name="Wardroper A."/>
            <person name="Felder M."/>
            <person name="Thangavelu M."/>
            <person name="Johnson D."/>
            <person name="Knights A."/>
            <person name="Loulseged H."/>
            <person name="Mungall K.L."/>
            <person name="Oliver K."/>
            <person name="Price C."/>
            <person name="Quail M.A."/>
            <person name="Urushihara H."/>
            <person name="Hernandez J."/>
            <person name="Rabbinowitsch E."/>
            <person name="Steffen D."/>
            <person name="Sanders M."/>
            <person name="Ma J."/>
            <person name="Kohara Y."/>
            <person name="Sharp S."/>
            <person name="Simmonds M.N."/>
            <person name="Spiegler S."/>
            <person name="Tivey A."/>
            <person name="Sugano S."/>
            <person name="White B."/>
            <person name="Walker D."/>
            <person name="Woodward J.R."/>
            <person name="Winckler T."/>
            <person name="Tanaka Y."/>
            <person name="Shaulsky G."/>
            <person name="Schleicher M."/>
            <person name="Weinstock G.M."/>
            <person name="Rosenthal A."/>
            <person name="Cox E.C."/>
            <person name="Chisholm R.L."/>
            <person name="Gibbs R.A."/>
            <person name="Loomis W.F."/>
            <person name="Platzer M."/>
            <person name="Kay R.R."/>
            <person name="Williams J.G."/>
            <person name="Dear P.H."/>
            <person name="Noegel A.A."/>
            <person name="Barrell B.G."/>
            <person name="Kuspa A."/>
        </authorList>
    </citation>
    <scope>NUCLEOTIDE SEQUENCE [LARGE SCALE GENOMIC DNA]</scope>
    <source>
        <strain>AX4</strain>
    </source>
</reference>
<accession>Q54U35</accession>
<sequence length="224" mass="25411">MMHALGDLFKPEEKEIKMDRDKCSGACVAIWTWKTIVRLICLIAGGVQVFMGGYIFYSISFTKDHSVQNYLSLSVVGFYACLTGLLILFAETRTRWTRRAVKVFVFLCNGLSRGIIYILIGAIDQSPIPFKFLNIITSMHIGLVCIAGGVVSIIEFLITYRRNRARLNQAIANHQQQAKGTELYDLFEREDFNNPEDAAAYDLEKGKDPNYIHQDLEMQPVQEA</sequence>
<evidence type="ECO:0000255" key="1"/>
<evidence type="ECO:0000305" key="2"/>
<gene>
    <name type="ORF">DDB_G0281339</name>
</gene>
<protein>
    <recommendedName>
        <fullName>Uncharacterized transmembrane protein DDB_G0281339</fullName>
    </recommendedName>
</protein>